<evidence type="ECO:0000250" key="1">
    <source>
        <dbReference type="UniProtKB" id="A0A1E3MAZ6"/>
    </source>
</evidence>
<evidence type="ECO:0000256" key="2">
    <source>
        <dbReference type="SAM" id="MobiDB-lite"/>
    </source>
</evidence>
<evidence type="ECO:0000269" key="3">
    <source>
    </source>
</evidence>
<evidence type="ECO:0000303" key="4">
    <source>
    </source>
</evidence>
<evidence type="ECO:0000305" key="5"/>
<evidence type="ECO:0000305" key="6">
    <source>
    </source>
</evidence>
<evidence type="ECO:0000312" key="7">
    <source>
        <dbReference type="EMBL" id="AAN56042.1"/>
    </source>
</evidence>
<gene>
    <name evidence="4" type="primary">pubA</name>
    <name evidence="7" type="ordered locus">SO_3030</name>
</gene>
<organism>
    <name type="scientific">Shewanella oneidensis (strain ATCC 700550 / JCM 31522 / CIP 106686 / LMG 19005 / NCIMB 14063 / MR-1)</name>
    <dbReference type="NCBI Taxonomy" id="211586"/>
    <lineage>
        <taxon>Bacteria</taxon>
        <taxon>Pseudomonadati</taxon>
        <taxon>Pseudomonadota</taxon>
        <taxon>Gammaproteobacteria</taxon>
        <taxon>Alteromonadales</taxon>
        <taxon>Shewanellaceae</taxon>
        <taxon>Shewanella</taxon>
    </lineage>
</organism>
<feature type="chain" id="PRO_0000460755" description="Putrescine N-hydroxylase">
    <location>
        <begin position="1"/>
        <end position="498"/>
    </location>
</feature>
<feature type="region of interest" description="Disordered" evidence="2">
    <location>
        <begin position="443"/>
        <end position="498"/>
    </location>
</feature>
<feature type="compositionally biased region" description="Polar residues" evidence="2">
    <location>
        <begin position="443"/>
        <end position="474"/>
    </location>
</feature>
<feature type="binding site" evidence="1">
    <location>
        <position position="23"/>
    </location>
    <ligand>
        <name>FAD</name>
        <dbReference type="ChEBI" id="CHEBI:57692"/>
    </ligand>
</feature>
<feature type="binding site" evidence="1">
    <location>
        <position position="43"/>
    </location>
    <ligand>
        <name>FAD</name>
        <dbReference type="ChEBI" id="CHEBI:57692"/>
    </ligand>
</feature>
<feature type="binding site" evidence="1">
    <location>
        <position position="45"/>
    </location>
    <ligand>
        <name>FAD</name>
        <dbReference type="ChEBI" id="CHEBI:57692"/>
    </ligand>
</feature>
<feature type="binding site" evidence="1">
    <location>
        <position position="50"/>
    </location>
    <ligand>
        <name>FAD</name>
        <dbReference type="ChEBI" id="CHEBI:57692"/>
    </ligand>
</feature>
<feature type="binding site" evidence="1">
    <location>
        <position position="51"/>
    </location>
    <ligand>
        <name>FAD</name>
        <dbReference type="ChEBI" id="CHEBI:57692"/>
    </ligand>
</feature>
<feature type="binding site" evidence="1">
    <location>
        <position position="62"/>
    </location>
    <ligand>
        <name>FAD</name>
        <dbReference type="ChEBI" id="CHEBI:57692"/>
    </ligand>
</feature>
<feature type="binding site" evidence="1">
    <location>
        <position position="62"/>
    </location>
    <ligand>
        <name>NADP(+)</name>
        <dbReference type="ChEBI" id="CHEBI:58349"/>
    </ligand>
</feature>
<feature type="binding site" evidence="1">
    <location>
        <position position="104"/>
    </location>
    <ligand>
        <name>NADP(+)</name>
        <dbReference type="ChEBI" id="CHEBI:58349"/>
    </ligand>
</feature>
<feature type="binding site" evidence="1">
    <location>
        <position position="127"/>
    </location>
    <ligand>
        <name>FAD</name>
        <dbReference type="ChEBI" id="CHEBI:57692"/>
    </ligand>
</feature>
<feature type="binding site" evidence="1">
    <location>
        <position position="207"/>
    </location>
    <ligand>
        <name>NADP(+)</name>
        <dbReference type="ChEBI" id="CHEBI:58349"/>
    </ligand>
</feature>
<feature type="binding site" evidence="1">
    <location>
        <position position="231"/>
    </location>
    <ligand>
        <name>NADP(+)</name>
        <dbReference type="ChEBI" id="CHEBI:58349"/>
    </ligand>
</feature>
<feature type="binding site" evidence="1">
    <location>
        <position position="275"/>
    </location>
    <ligand>
        <name>NADP(+)</name>
        <dbReference type="ChEBI" id="CHEBI:58349"/>
    </ligand>
</feature>
<feature type="binding site" evidence="1">
    <location>
        <position position="309"/>
    </location>
    <ligand>
        <name>NADP(+)</name>
        <dbReference type="ChEBI" id="CHEBI:58349"/>
    </ligand>
</feature>
<feature type="binding site" evidence="1">
    <location>
        <position position="386"/>
    </location>
    <ligand>
        <name>FAD</name>
        <dbReference type="ChEBI" id="CHEBI:57692"/>
    </ligand>
</feature>
<feature type="binding site" evidence="1">
    <location>
        <position position="397"/>
    </location>
    <ligand>
        <name>FAD</name>
        <dbReference type="ChEBI" id="CHEBI:57692"/>
    </ligand>
</feature>
<feature type="binding site" evidence="1">
    <location>
        <position position="399"/>
    </location>
    <ligand>
        <name>FAD</name>
        <dbReference type="ChEBI" id="CHEBI:57692"/>
    </ligand>
</feature>
<reference key="1">
    <citation type="journal article" date="2002" name="Nat. Biotechnol.">
        <title>Genome sequence of the dissimilatory metal ion-reducing bacterium Shewanella oneidensis.</title>
        <authorList>
            <person name="Heidelberg J.F."/>
            <person name="Paulsen I.T."/>
            <person name="Nelson K.E."/>
            <person name="Gaidos E.J."/>
            <person name="Nelson W.C."/>
            <person name="Read T.D."/>
            <person name="Eisen J.A."/>
            <person name="Seshadri R."/>
            <person name="Ward N.L."/>
            <person name="Methe B.A."/>
            <person name="Clayton R.A."/>
            <person name="Meyer T."/>
            <person name="Tsapin A."/>
            <person name="Scott J."/>
            <person name="Beanan M.J."/>
            <person name="Brinkac L.M."/>
            <person name="Daugherty S.C."/>
            <person name="DeBoy R.T."/>
            <person name="Dodson R.J."/>
            <person name="Durkin A.S."/>
            <person name="Haft D.H."/>
            <person name="Kolonay J.F."/>
            <person name="Madupu R."/>
            <person name="Peterson J.D."/>
            <person name="Umayam L.A."/>
            <person name="White O."/>
            <person name="Wolf A.M."/>
            <person name="Vamathevan J.J."/>
            <person name="Weidman J.F."/>
            <person name="Impraim M."/>
            <person name="Lee K."/>
            <person name="Berry K.J."/>
            <person name="Lee C."/>
            <person name="Mueller J."/>
            <person name="Khouri H.M."/>
            <person name="Gill J."/>
            <person name="Utterback T.R."/>
            <person name="McDonald L.A."/>
            <person name="Feldblyum T.V."/>
            <person name="Smith H.O."/>
            <person name="Venter J.C."/>
            <person name="Nealson K.H."/>
            <person name="Fraser C.M."/>
        </authorList>
    </citation>
    <scope>NUCLEOTIDE SEQUENCE [LARGE SCALE GENOMIC DNA]</scope>
    <source>
        <strain>ATCC 700550 / JCM 31522 / CIP 106686 / LMG 19005 / NCIMB 14063 / MR-1</strain>
    </source>
</reference>
<reference key="2">
    <citation type="journal article" date="2016" name="ACS Chem. Biol.">
        <title>Functional Identification of Putrescine C- and N-Hydroxylases.</title>
        <authorList>
            <person name="Li B."/>
            <person name="Lowe-Power T."/>
            <person name="Kurihara S."/>
            <person name="Gonzales S."/>
            <person name="Naidoo J."/>
            <person name="MacMillan J.B."/>
            <person name="Allen C."/>
            <person name="Michael A.J."/>
        </authorList>
    </citation>
    <scope>FUNCTION AS A PUTRESCINE N-HYDROXYLASE</scope>
    <scope>PATHWAY</scope>
    <source>
        <strain>ATCC 700550 / JCM 31522 / CIP 106686 / LMG 19005 / NCIMB 14063 / MR-1</strain>
    </source>
</reference>
<protein>
    <recommendedName>
        <fullName evidence="4">Putrescine N-hydroxylase</fullName>
        <ecNumber evidence="6">1.14.13.252</ecNumber>
    </recommendedName>
</protein>
<comment type="function">
    <text evidence="3">N-hydroxylating monooxygenase involved in the biosynthesis of the siderophore putrebactin (PubMed:27541336). Catalyzes the N-hydroxylation of the aliphatic diamine putrescine into N-hydroxyputrescine (NHP) (PubMed:27541336).</text>
</comment>
<comment type="catalytic activity">
    <reaction evidence="6">
        <text>putrescine + NADPH + O2 = N-hydroxyputrescine + NADP(+) + H2O</text>
        <dbReference type="Rhea" id="RHEA:78815"/>
        <dbReference type="ChEBI" id="CHEBI:15377"/>
        <dbReference type="ChEBI" id="CHEBI:15379"/>
        <dbReference type="ChEBI" id="CHEBI:57783"/>
        <dbReference type="ChEBI" id="CHEBI:58349"/>
        <dbReference type="ChEBI" id="CHEBI:180909"/>
        <dbReference type="ChEBI" id="CHEBI:326268"/>
        <dbReference type="EC" id="1.14.13.252"/>
    </reaction>
    <physiologicalReaction direction="left-to-right" evidence="6">
        <dbReference type="Rhea" id="RHEA:78816"/>
    </physiologicalReaction>
</comment>
<comment type="cofactor">
    <cofactor evidence="1">
        <name>FAD</name>
        <dbReference type="ChEBI" id="CHEBI:57692"/>
    </cofactor>
</comment>
<comment type="pathway">
    <text evidence="6">Siderophore biosynthesis.</text>
</comment>
<comment type="similarity">
    <text evidence="5">Belongs to the lysine N(6)-hydroxylase/L-ornithine N(5)-oxygenase family.</text>
</comment>
<keyword id="KW-0274">FAD</keyword>
<keyword id="KW-0285">Flavoprotein</keyword>
<keyword id="KW-0503">Monooxygenase</keyword>
<keyword id="KW-0521">NADP</keyword>
<keyword id="KW-0560">Oxidoreductase</keyword>
<keyword id="KW-1185">Reference proteome</keyword>
<proteinExistence type="evidence at protein level"/>
<sequence>MTTPKKEIDRTIYDLLGIGIGPFNLGLAALCEPINDLSCLFLDAKTEFDWHPGMLINSSRLQTPFMSDLVTMADPTSRFSYLNFAKQTSRLYSFYIRENFFLPRHEYNQYCQWVSKQLSNLNFGVKVTQVNYNAGEGIYAVTAIDRRSGKPLTYLCRKLVLGTGTTPYLPDNCPIQDPRVMHSASYMQQKTYLQSQSAITVIGSGQSAAEIFYDLLQDIDIYGYQLNWMTRSPRFYPLEYTKLTLEMTSPDYVDYFHELSSEKRHRLITEQKSLYKGINAELINDIYDLLYQKRLISNIQCQLLTNVALTAIDTSGDKLKLQFKHLEQDYALDQLTSAVVLGTGYQYHLPDFIQGIKSQIEFDDHGQLAIQRDYGIDVRGDIFIQNAGLHTHGISSPDLGMGCYRNATILQAVLGYAPYPIETRIAFQTFAPCNIADAKRQPLESNTHSAVTPSKTRQGLNPSAKSVQQPSIEPQTALRIAPTGGNVSALMAPNKEAQ</sequence>
<accession>Q8ECU3</accession>
<name>PUTNH_SHEON</name>
<dbReference type="EC" id="1.14.13.252" evidence="6"/>
<dbReference type="EMBL" id="AE014299">
    <property type="protein sequence ID" value="AAN56042.1"/>
    <property type="molecule type" value="Genomic_DNA"/>
</dbReference>
<dbReference type="RefSeq" id="NP_718598.1">
    <property type="nucleotide sequence ID" value="NC_004347.2"/>
</dbReference>
<dbReference type="RefSeq" id="WP_011072933.1">
    <property type="nucleotide sequence ID" value="NC_004347.2"/>
</dbReference>
<dbReference type="SMR" id="Q8ECU3"/>
<dbReference type="STRING" id="211586.SO_3030"/>
<dbReference type="PaxDb" id="211586-SO_3030"/>
<dbReference type="KEGG" id="son:SO_3030"/>
<dbReference type="PATRIC" id="fig|211586.12.peg.2925"/>
<dbReference type="eggNOG" id="COG3486">
    <property type="taxonomic scope" value="Bacteria"/>
</dbReference>
<dbReference type="HOGENOM" id="CLU_020931_0_0_6"/>
<dbReference type="OrthoDB" id="7527071at2"/>
<dbReference type="PhylomeDB" id="Q8ECU3"/>
<dbReference type="BioCyc" id="MetaCyc:MONOMER-20250"/>
<dbReference type="BioCyc" id="SONE211586:G1GMP-2802-MONOMER"/>
<dbReference type="Proteomes" id="UP000008186">
    <property type="component" value="Chromosome"/>
</dbReference>
<dbReference type="GO" id="GO:0004497">
    <property type="term" value="F:monooxygenase activity"/>
    <property type="evidence" value="ECO:0007669"/>
    <property type="project" value="UniProtKB-KW"/>
</dbReference>
<dbReference type="GO" id="GO:0009058">
    <property type="term" value="P:biosynthetic process"/>
    <property type="evidence" value="ECO:0007669"/>
    <property type="project" value="UniProtKB-ARBA"/>
</dbReference>
<dbReference type="FunFam" id="3.50.50.60:FF:000135">
    <property type="entry name" value="L-lysine 6-monooxygenase IucD"/>
    <property type="match status" value="1"/>
</dbReference>
<dbReference type="Gene3D" id="3.50.50.60">
    <property type="entry name" value="FAD/NAD(P)-binding domain"/>
    <property type="match status" value="1"/>
</dbReference>
<dbReference type="InterPro" id="IPR036188">
    <property type="entry name" value="FAD/NAD-bd_sf"/>
</dbReference>
<dbReference type="InterPro" id="IPR025700">
    <property type="entry name" value="Lys/Orn_oxygenase"/>
</dbReference>
<dbReference type="PANTHER" id="PTHR42802:SF1">
    <property type="entry name" value="L-ORNITHINE N(5)-MONOOXYGENASE"/>
    <property type="match status" value="1"/>
</dbReference>
<dbReference type="PANTHER" id="PTHR42802">
    <property type="entry name" value="MONOOXYGENASE"/>
    <property type="match status" value="1"/>
</dbReference>
<dbReference type="Pfam" id="PF13434">
    <property type="entry name" value="Lys_Orn_oxgnase"/>
    <property type="match status" value="1"/>
</dbReference>
<dbReference type="SUPFAM" id="SSF51905">
    <property type="entry name" value="FAD/NAD(P)-binding domain"/>
    <property type="match status" value="1"/>
</dbReference>